<reference key="1">
    <citation type="journal article" date="1995" name="Science">
        <title>Whole-genome random sequencing and assembly of Haemophilus influenzae Rd.</title>
        <authorList>
            <person name="Fleischmann R.D."/>
            <person name="Adams M.D."/>
            <person name="White O."/>
            <person name="Clayton R.A."/>
            <person name="Kirkness E.F."/>
            <person name="Kerlavage A.R."/>
            <person name="Bult C.J."/>
            <person name="Tomb J.-F."/>
            <person name="Dougherty B.A."/>
            <person name="Merrick J.M."/>
            <person name="McKenney K."/>
            <person name="Sutton G.G."/>
            <person name="FitzHugh W."/>
            <person name="Fields C.A."/>
            <person name="Gocayne J.D."/>
            <person name="Scott J.D."/>
            <person name="Shirley R."/>
            <person name="Liu L.-I."/>
            <person name="Glodek A."/>
            <person name="Kelley J.M."/>
            <person name="Weidman J.F."/>
            <person name="Phillips C.A."/>
            <person name="Spriggs T."/>
            <person name="Hedblom E."/>
            <person name="Cotton M.D."/>
            <person name="Utterback T.R."/>
            <person name="Hanna M.C."/>
            <person name="Nguyen D.T."/>
            <person name="Saudek D.M."/>
            <person name="Brandon R.C."/>
            <person name="Fine L.D."/>
            <person name="Fritchman J.L."/>
            <person name="Fuhrmann J.L."/>
            <person name="Geoghagen N.S.M."/>
            <person name="Gnehm C.L."/>
            <person name="McDonald L.A."/>
            <person name="Small K.V."/>
            <person name="Fraser C.M."/>
            <person name="Smith H.O."/>
            <person name="Venter J.C."/>
        </authorList>
    </citation>
    <scope>NUCLEOTIDE SEQUENCE [LARGE SCALE GENOMIC DNA]</scope>
    <source>
        <strain>ATCC 51907 / DSM 11121 / KW20 / Rd</strain>
    </source>
</reference>
<dbReference type="EMBL" id="L42023">
    <property type="protein sequence ID" value="AAC22653.1"/>
    <property type="molecule type" value="Genomic_DNA"/>
</dbReference>
<dbReference type="RefSeq" id="NP_439154.1">
    <property type="nucleotide sequence ID" value="NC_000907.1"/>
</dbReference>
<dbReference type="SMR" id="P43767"/>
<dbReference type="STRING" id="71421.HI_0991"/>
<dbReference type="DNASU" id="949990"/>
<dbReference type="EnsemblBacteria" id="AAC22653">
    <property type="protein sequence ID" value="AAC22653"/>
    <property type="gene ID" value="HI_0991"/>
</dbReference>
<dbReference type="KEGG" id="hin:HI_0991"/>
<dbReference type="PATRIC" id="fig|71421.8.peg.1034"/>
<dbReference type="eggNOG" id="COG1195">
    <property type="taxonomic scope" value="Bacteria"/>
</dbReference>
<dbReference type="HOGENOM" id="CLU_040267_0_0_6"/>
<dbReference type="OrthoDB" id="9803889at2"/>
<dbReference type="PhylomeDB" id="P43767"/>
<dbReference type="BioCyc" id="HINF71421:G1GJ1-1033-MONOMER"/>
<dbReference type="Proteomes" id="UP000000579">
    <property type="component" value="Chromosome"/>
</dbReference>
<dbReference type="GO" id="GO:0005737">
    <property type="term" value="C:cytoplasm"/>
    <property type="evidence" value="ECO:0007669"/>
    <property type="project" value="UniProtKB-SubCell"/>
</dbReference>
<dbReference type="GO" id="GO:0005524">
    <property type="term" value="F:ATP binding"/>
    <property type="evidence" value="ECO:0007669"/>
    <property type="project" value="UniProtKB-UniRule"/>
</dbReference>
<dbReference type="GO" id="GO:0003697">
    <property type="term" value="F:single-stranded DNA binding"/>
    <property type="evidence" value="ECO:0007669"/>
    <property type="project" value="UniProtKB-UniRule"/>
</dbReference>
<dbReference type="GO" id="GO:0006260">
    <property type="term" value="P:DNA replication"/>
    <property type="evidence" value="ECO:0007669"/>
    <property type="project" value="UniProtKB-UniRule"/>
</dbReference>
<dbReference type="GO" id="GO:0000731">
    <property type="term" value="P:DNA synthesis involved in DNA repair"/>
    <property type="evidence" value="ECO:0000318"/>
    <property type="project" value="GO_Central"/>
</dbReference>
<dbReference type="GO" id="GO:0006302">
    <property type="term" value="P:double-strand break repair"/>
    <property type="evidence" value="ECO:0000318"/>
    <property type="project" value="GO_Central"/>
</dbReference>
<dbReference type="GO" id="GO:0009432">
    <property type="term" value="P:SOS response"/>
    <property type="evidence" value="ECO:0007669"/>
    <property type="project" value="UniProtKB-UniRule"/>
</dbReference>
<dbReference type="FunFam" id="1.20.1050.90:FF:000001">
    <property type="entry name" value="DNA replication and repair protein RecF"/>
    <property type="match status" value="1"/>
</dbReference>
<dbReference type="Gene3D" id="3.40.50.300">
    <property type="entry name" value="P-loop containing nucleotide triphosphate hydrolases"/>
    <property type="match status" value="1"/>
</dbReference>
<dbReference type="Gene3D" id="1.20.1050.90">
    <property type="entry name" value="RecF/RecN/SMC, N-terminal domain"/>
    <property type="match status" value="1"/>
</dbReference>
<dbReference type="HAMAP" id="MF_00365">
    <property type="entry name" value="RecF"/>
    <property type="match status" value="1"/>
</dbReference>
<dbReference type="InterPro" id="IPR001238">
    <property type="entry name" value="DNA-binding_RecF"/>
</dbReference>
<dbReference type="InterPro" id="IPR018078">
    <property type="entry name" value="DNA-binding_RecF_CS"/>
</dbReference>
<dbReference type="InterPro" id="IPR027417">
    <property type="entry name" value="P-loop_NTPase"/>
</dbReference>
<dbReference type="InterPro" id="IPR003395">
    <property type="entry name" value="RecF/RecN/SMC_N"/>
</dbReference>
<dbReference type="InterPro" id="IPR042174">
    <property type="entry name" value="RecF_2"/>
</dbReference>
<dbReference type="NCBIfam" id="TIGR00611">
    <property type="entry name" value="recf"/>
    <property type="match status" value="1"/>
</dbReference>
<dbReference type="PANTHER" id="PTHR32182">
    <property type="entry name" value="DNA REPLICATION AND REPAIR PROTEIN RECF"/>
    <property type="match status" value="1"/>
</dbReference>
<dbReference type="PANTHER" id="PTHR32182:SF0">
    <property type="entry name" value="DNA REPLICATION AND REPAIR PROTEIN RECF"/>
    <property type="match status" value="1"/>
</dbReference>
<dbReference type="Pfam" id="PF02463">
    <property type="entry name" value="SMC_N"/>
    <property type="match status" value="1"/>
</dbReference>
<dbReference type="SUPFAM" id="SSF52540">
    <property type="entry name" value="P-loop containing nucleoside triphosphate hydrolases"/>
    <property type="match status" value="1"/>
</dbReference>
<dbReference type="PROSITE" id="PS00617">
    <property type="entry name" value="RECF_1"/>
    <property type="match status" value="1"/>
</dbReference>
<dbReference type="PROSITE" id="PS00618">
    <property type="entry name" value="RECF_2"/>
    <property type="match status" value="1"/>
</dbReference>
<feature type="chain" id="PRO_0000196420" description="DNA replication and repair protein RecF">
    <location>
        <begin position="1"/>
        <end position="359"/>
    </location>
</feature>
<feature type="binding site" evidence="2">
    <location>
        <begin position="30"/>
        <end position="37"/>
    </location>
    <ligand>
        <name>ATP</name>
        <dbReference type="ChEBI" id="CHEBI:30616"/>
    </ligand>
</feature>
<proteinExistence type="inferred from homology"/>
<name>RECF_HAEIN</name>
<organism>
    <name type="scientific">Haemophilus influenzae (strain ATCC 51907 / DSM 11121 / KW20 / Rd)</name>
    <dbReference type="NCBI Taxonomy" id="71421"/>
    <lineage>
        <taxon>Bacteria</taxon>
        <taxon>Pseudomonadati</taxon>
        <taxon>Pseudomonadota</taxon>
        <taxon>Gammaproteobacteria</taxon>
        <taxon>Pasteurellales</taxon>
        <taxon>Pasteurellaceae</taxon>
        <taxon>Haemophilus</taxon>
    </lineage>
</organism>
<sequence>MAISRLLVEKFRNLTAVDLDFDPCFNFLIGNNGSGKTSLLEAIFYLGHGRSFKSAVTNRIISYDEPHFTLFGQIQESQHQWSIGLQKLRQGNTLVKINGEDGNKISDLAHLLPMQLITPEGLTLLNGGPSYRRAFLDWGLFHHQTSFYSAWSNLNRLLKQRNAALAQNQPYSAIKIWDVELAKLAHQVSEWRAEYAEALSPEIEQTCQLFLPELEINVSFHQGWEKNADYYEILQQNFERDRALNYTFSGPQKADFRFKAQGLPVEDVLSRGQLKLLMCALRLAQGEHLMKEKQRHCIFLIDDFASELDQYKRALLAERLQQSGSQVFVTAITQRQLKEMQVENKKMFSVHNGIINALN</sequence>
<comment type="function">
    <text evidence="1">The RecF protein is involved in DNA metabolism; it is required for DNA replication and normal SOS inducibility. RecF binds preferentially to single-stranded, linear DNA. It also seems to bind ATP (By similarity).</text>
</comment>
<comment type="subcellular location">
    <subcellularLocation>
        <location evidence="1">Cytoplasm</location>
    </subcellularLocation>
</comment>
<comment type="similarity">
    <text evidence="3">Belongs to the RecF family.</text>
</comment>
<keyword id="KW-0067">ATP-binding</keyword>
<keyword id="KW-0963">Cytoplasm</keyword>
<keyword id="KW-0227">DNA damage</keyword>
<keyword id="KW-0234">DNA repair</keyword>
<keyword id="KW-0235">DNA replication</keyword>
<keyword id="KW-0238">DNA-binding</keyword>
<keyword id="KW-0547">Nucleotide-binding</keyword>
<keyword id="KW-1185">Reference proteome</keyword>
<keyword id="KW-0742">SOS response</keyword>
<accession>P43767</accession>
<gene>
    <name type="primary">recF</name>
    <name type="ordered locus">HI_0991</name>
</gene>
<evidence type="ECO:0000250" key="1"/>
<evidence type="ECO:0000255" key="2"/>
<evidence type="ECO:0000305" key="3"/>
<protein>
    <recommendedName>
        <fullName>DNA replication and repair protein RecF</fullName>
    </recommendedName>
</protein>